<feature type="chain" id="PRO_0000444890" description="Glucose-induced degradation protein 8-B homolog">
    <location>
        <begin position="1"/>
        <end position="229"/>
    </location>
</feature>
<feature type="domain" description="LisH" evidence="3">
    <location>
        <begin position="26"/>
        <end position="58"/>
    </location>
</feature>
<feature type="domain" description="CTLH" evidence="2">
    <location>
        <begin position="64"/>
        <end position="121"/>
    </location>
</feature>
<sequence>MMSYAEKPEDITRDEWMEKLNNVHIQRADMNRLIMNYLVTEGFKEAAEKFRMESGIEPSVDLDSLDERIKIREMVLKGQIQEAIALINSLHPELLDTNRYLYFHLQQQHLIELIRLRETEAALEFAQTQLAEQGEESRECLTEMERTLALLAFDNPEESPFGDLLNMMQRQKVWSEVNQAVLDYENRESTPKLAKLLKLLLWAQNELDQKKVKYPKMTDLSKGTIEDPK</sequence>
<accession>E7FGY2</accession>
<accession>F8W234</accession>
<reference key="1">
    <citation type="journal article" date="2013" name="Nature">
        <title>The zebrafish reference genome sequence and its relationship to the human genome.</title>
        <authorList>
            <person name="Howe K."/>
            <person name="Clark M.D."/>
            <person name="Torroja C.F."/>
            <person name="Torrance J."/>
            <person name="Berthelot C."/>
            <person name="Muffato M."/>
            <person name="Collins J.E."/>
            <person name="Humphray S."/>
            <person name="McLaren K."/>
            <person name="Matthews L."/>
            <person name="McLaren S."/>
            <person name="Sealy I."/>
            <person name="Caccamo M."/>
            <person name="Churcher C."/>
            <person name="Scott C."/>
            <person name="Barrett J.C."/>
            <person name="Koch R."/>
            <person name="Rauch G.J."/>
            <person name="White S."/>
            <person name="Chow W."/>
            <person name="Kilian B."/>
            <person name="Quintais L.T."/>
            <person name="Guerra-Assuncao J.A."/>
            <person name="Zhou Y."/>
            <person name="Gu Y."/>
            <person name="Yen J."/>
            <person name="Vogel J.H."/>
            <person name="Eyre T."/>
            <person name="Redmond S."/>
            <person name="Banerjee R."/>
            <person name="Chi J."/>
            <person name="Fu B."/>
            <person name="Langley E."/>
            <person name="Maguire S.F."/>
            <person name="Laird G.K."/>
            <person name="Lloyd D."/>
            <person name="Kenyon E."/>
            <person name="Donaldson S."/>
            <person name="Sehra H."/>
            <person name="Almeida-King J."/>
            <person name="Loveland J."/>
            <person name="Trevanion S."/>
            <person name="Jones M."/>
            <person name="Quail M."/>
            <person name="Willey D."/>
            <person name="Hunt A."/>
            <person name="Burton J."/>
            <person name="Sims S."/>
            <person name="McLay K."/>
            <person name="Plumb B."/>
            <person name="Davis J."/>
            <person name="Clee C."/>
            <person name="Oliver K."/>
            <person name="Clark R."/>
            <person name="Riddle C."/>
            <person name="Elliot D."/>
            <person name="Threadgold G."/>
            <person name="Harden G."/>
            <person name="Ware D."/>
            <person name="Begum S."/>
            <person name="Mortimore B."/>
            <person name="Kerry G."/>
            <person name="Heath P."/>
            <person name="Phillimore B."/>
            <person name="Tracey A."/>
            <person name="Corby N."/>
            <person name="Dunn M."/>
            <person name="Johnson C."/>
            <person name="Wood J."/>
            <person name="Clark S."/>
            <person name="Pelan S."/>
            <person name="Griffiths G."/>
            <person name="Smith M."/>
            <person name="Glithero R."/>
            <person name="Howden P."/>
            <person name="Barker N."/>
            <person name="Lloyd C."/>
            <person name="Stevens C."/>
            <person name="Harley J."/>
            <person name="Holt K."/>
            <person name="Panagiotidis G."/>
            <person name="Lovell J."/>
            <person name="Beasley H."/>
            <person name="Henderson C."/>
            <person name="Gordon D."/>
            <person name="Auger K."/>
            <person name="Wright D."/>
            <person name="Collins J."/>
            <person name="Raisen C."/>
            <person name="Dyer L."/>
            <person name="Leung K."/>
            <person name="Robertson L."/>
            <person name="Ambridge K."/>
            <person name="Leongamornlert D."/>
            <person name="McGuire S."/>
            <person name="Gilderthorp R."/>
            <person name="Griffiths C."/>
            <person name="Manthravadi D."/>
            <person name="Nichol S."/>
            <person name="Barker G."/>
            <person name="Whitehead S."/>
            <person name="Kay M."/>
            <person name="Brown J."/>
            <person name="Murnane C."/>
            <person name="Gray E."/>
            <person name="Humphries M."/>
            <person name="Sycamore N."/>
            <person name="Barker D."/>
            <person name="Saunders D."/>
            <person name="Wallis J."/>
            <person name="Babbage A."/>
            <person name="Hammond S."/>
            <person name="Mashreghi-Mohammadi M."/>
            <person name="Barr L."/>
            <person name="Martin S."/>
            <person name="Wray P."/>
            <person name="Ellington A."/>
            <person name="Matthews N."/>
            <person name="Ellwood M."/>
            <person name="Woodmansey R."/>
            <person name="Clark G."/>
            <person name="Cooper J."/>
            <person name="Tromans A."/>
            <person name="Grafham D."/>
            <person name="Skuce C."/>
            <person name="Pandian R."/>
            <person name="Andrews R."/>
            <person name="Harrison E."/>
            <person name="Kimberley A."/>
            <person name="Garnett J."/>
            <person name="Fosker N."/>
            <person name="Hall R."/>
            <person name="Garner P."/>
            <person name="Kelly D."/>
            <person name="Bird C."/>
            <person name="Palmer S."/>
            <person name="Gehring I."/>
            <person name="Berger A."/>
            <person name="Dooley C.M."/>
            <person name="Ersan-Urun Z."/>
            <person name="Eser C."/>
            <person name="Geiger H."/>
            <person name="Geisler M."/>
            <person name="Karotki L."/>
            <person name="Kirn A."/>
            <person name="Konantz J."/>
            <person name="Konantz M."/>
            <person name="Oberlander M."/>
            <person name="Rudolph-Geiger S."/>
            <person name="Teucke M."/>
            <person name="Lanz C."/>
            <person name="Raddatz G."/>
            <person name="Osoegawa K."/>
            <person name="Zhu B."/>
            <person name="Rapp A."/>
            <person name="Widaa S."/>
            <person name="Langford C."/>
            <person name="Yang F."/>
            <person name="Schuster S.C."/>
            <person name="Carter N.P."/>
            <person name="Harrow J."/>
            <person name="Ning Z."/>
            <person name="Herrero J."/>
            <person name="Searle S.M."/>
            <person name="Enright A."/>
            <person name="Geisler R."/>
            <person name="Plasterk R.H."/>
            <person name="Lee C."/>
            <person name="Westerfield M."/>
            <person name="de Jong P.J."/>
            <person name="Zon L.I."/>
            <person name="Postlethwait J.H."/>
            <person name="Nusslein-Volhard C."/>
            <person name="Hubbard T.J."/>
            <person name="Roest Crollius H."/>
            <person name="Rogers J."/>
            <person name="Stemple D.L."/>
        </authorList>
    </citation>
    <scope>NUCLEOTIDE SEQUENCE [LARGE SCALE GENOMIC DNA]</scope>
    <source>
        <strain>Tuebingen</strain>
    </source>
</reference>
<reference key="2">
    <citation type="journal article" date="2017" name="Cell Res.">
        <title>Twa1/Gid8 is a beta-catenin nuclear retention factor in Wnt signaling and colorectal tumorigenesis.</title>
        <authorList>
            <person name="Lu Y."/>
            <person name="Xie S."/>
            <person name="Zhang W."/>
            <person name="Zhang C."/>
            <person name="Gao C."/>
            <person name="Sun Q."/>
            <person name="Cai Y."/>
            <person name="Xu Z."/>
            <person name="Xiao M."/>
            <person name="Xu Y."/>
            <person name="Huang X."/>
            <person name="Wu X."/>
            <person name="Liu W."/>
            <person name="Wang F."/>
            <person name="Kang Y."/>
            <person name="Zhou T."/>
        </authorList>
    </citation>
    <scope>FUNCTION</scope>
    <scope>DEVELOPMENTAL STAGE</scope>
    <scope>DISRUPTION PHENOTYPE</scope>
</reference>
<organism>
    <name type="scientific">Danio rerio</name>
    <name type="common">Zebrafish</name>
    <name type="synonym">Brachydanio rerio</name>
    <dbReference type="NCBI Taxonomy" id="7955"/>
    <lineage>
        <taxon>Eukaryota</taxon>
        <taxon>Metazoa</taxon>
        <taxon>Chordata</taxon>
        <taxon>Craniata</taxon>
        <taxon>Vertebrata</taxon>
        <taxon>Euteleostomi</taxon>
        <taxon>Actinopterygii</taxon>
        <taxon>Neopterygii</taxon>
        <taxon>Teleostei</taxon>
        <taxon>Ostariophysi</taxon>
        <taxon>Cypriniformes</taxon>
        <taxon>Danionidae</taxon>
        <taxon>Danioninae</taxon>
        <taxon>Danio</taxon>
    </lineage>
</organism>
<gene>
    <name type="primary">gid8b</name>
    <name type="synonym">c20orf11</name>
    <name evidence="5" type="synonym">twa1</name>
</gene>
<name>GID8B_DANRE</name>
<evidence type="ECO:0000250" key="1">
    <source>
        <dbReference type="UniProtKB" id="Q9NWU2"/>
    </source>
</evidence>
<evidence type="ECO:0000255" key="2">
    <source>
        <dbReference type="PROSITE-ProRule" id="PRU00058"/>
    </source>
</evidence>
<evidence type="ECO:0000255" key="3">
    <source>
        <dbReference type="PROSITE-ProRule" id="PRU00126"/>
    </source>
</evidence>
<evidence type="ECO:0000269" key="4">
    <source>
    </source>
</evidence>
<evidence type="ECO:0000303" key="5">
    <source>
    </source>
</evidence>
<comment type="function">
    <text evidence="1 4">Core component of the CTLH E3 ubiquitin-protein ligase complex that selectively accepts ubiquitin from UBE2H and mediates ubiquitination and subsequent proteasomal degradation of target proteins (By similarity). Acts as a positive regulator of Wnt signaling pathway by promoting beta-catenin (CTNNB1) nuclear accumulation (By similarity). Required for normal Wnt signaling and normal dorsoventral patterning during embryogenesis (PubMed:28829046).</text>
</comment>
<comment type="subunit">
    <text evidence="1">Identified in the CTLH complex that contains at least MAEA, RMND5A (or alternatively its paralog RMND5B), GID8, WDR26, and RANBP9 and/or RANBP10. Interacts with CTNNB1.</text>
</comment>
<comment type="subcellular location">
    <subcellularLocation>
        <location evidence="1">Cytoplasm</location>
    </subcellularLocation>
    <subcellularLocation>
        <location evidence="1">Nucleus</location>
    </subcellularLocation>
    <text evidence="1">Localizes in the cytoplasm in the absence of Wnt stimulation and in the nucleus in the presence of Wnt stimulation.</text>
</comment>
<comment type="developmental stage">
    <text evidence="4">Expressed in the early developmental stages of embryos.</text>
</comment>
<comment type="disruption phenotype">
    <text evidence="4">Morpholino knockdown produces morphants which exhibit loss or reduction of dorsal embryonic structures and Wnt signaling deficiency.</text>
</comment>
<keyword id="KW-0963">Cytoplasm</keyword>
<keyword id="KW-0217">Developmental protein</keyword>
<keyword id="KW-0539">Nucleus</keyword>
<keyword id="KW-1185">Reference proteome</keyword>
<keyword id="KW-0879">Wnt signaling pathway</keyword>
<proteinExistence type="evidence at transcript level"/>
<dbReference type="EMBL" id="BX649300">
    <property type="status" value="NOT_ANNOTATED_CDS"/>
    <property type="molecule type" value="Genomic_DNA"/>
</dbReference>
<dbReference type="EMBL" id="CR407550">
    <property type="status" value="NOT_ANNOTATED_CDS"/>
    <property type="molecule type" value="Genomic_DNA"/>
</dbReference>
<dbReference type="RefSeq" id="NP_001373433.1">
    <property type="nucleotide sequence ID" value="NM_001386504.1"/>
</dbReference>
<dbReference type="RefSeq" id="XP_002666524.1">
    <property type="nucleotide sequence ID" value="XM_002666478.5"/>
</dbReference>
<dbReference type="RefSeq" id="XP_017209191.1">
    <property type="nucleotide sequence ID" value="XM_017353702.1"/>
</dbReference>
<dbReference type="RefSeq" id="XP_017209192.1">
    <property type="nucleotide sequence ID" value="XM_017353703.3"/>
</dbReference>
<dbReference type="SMR" id="E7FGY2"/>
<dbReference type="FunCoup" id="E7FGY2">
    <property type="interactions" value="2908"/>
</dbReference>
<dbReference type="STRING" id="7955.ENSDARP00000054737"/>
<dbReference type="PeptideAtlas" id="E7FGY2"/>
<dbReference type="Ensembl" id="ENSDART00000054738">
    <property type="protein sequence ID" value="ENSDARP00000054737"/>
    <property type="gene ID" value="ENSDARG00000037589"/>
</dbReference>
<dbReference type="Ensembl" id="ENSDART00000148457">
    <property type="protein sequence ID" value="ENSDARP00000124870"/>
    <property type="gene ID" value="ENSDARG00000037589"/>
</dbReference>
<dbReference type="GeneID" id="566067"/>
<dbReference type="AGR" id="ZFIN:ZDB-GENE-030515-4"/>
<dbReference type="CTD" id="566067"/>
<dbReference type="ZFIN" id="ZDB-GENE-030515-4">
    <property type="gene designation" value="gid8b"/>
</dbReference>
<dbReference type="InParanoid" id="E7FGY2"/>
<dbReference type="OMA" id="KMILWAQ"/>
<dbReference type="OrthoDB" id="2415936at2759"/>
<dbReference type="TreeFam" id="TF300176"/>
<dbReference type="Reactome" id="R-DRE-9861718">
    <property type="pathway name" value="Regulation of pyruvate metabolism"/>
</dbReference>
<dbReference type="PRO" id="PR:E7FGY2"/>
<dbReference type="Proteomes" id="UP000000437">
    <property type="component" value="Chromosome 23"/>
</dbReference>
<dbReference type="Bgee" id="ENSDARG00000037589">
    <property type="expression patterns" value="Expressed in gastrula and 35 other cell types or tissues"/>
</dbReference>
<dbReference type="GO" id="GO:0005737">
    <property type="term" value="C:cytoplasm"/>
    <property type="evidence" value="ECO:0000318"/>
    <property type="project" value="GO_Central"/>
</dbReference>
<dbReference type="GO" id="GO:0005634">
    <property type="term" value="C:nucleus"/>
    <property type="evidence" value="ECO:0000318"/>
    <property type="project" value="GO_Central"/>
</dbReference>
<dbReference type="GO" id="GO:0048263">
    <property type="term" value="P:determination of dorsal identity"/>
    <property type="evidence" value="ECO:0000315"/>
    <property type="project" value="ZFIN"/>
</dbReference>
<dbReference type="GO" id="GO:0090263">
    <property type="term" value="P:positive regulation of canonical Wnt signaling pathway"/>
    <property type="evidence" value="ECO:0000315"/>
    <property type="project" value="UniProtKB"/>
</dbReference>
<dbReference type="GO" id="GO:0043161">
    <property type="term" value="P:proteasome-mediated ubiquitin-dependent protein catabolic process"/>
    <property type="evidence" value="ECO:0000318"/>
    <property type="project" value="GO_Central"/>
</dbReference>
<dbReference type="GO" id="GO:0016055">
    <property type="term" value="P:Wnt signaling pathway"/>
    <property type="evidence" value="ECO:0007669"/>
    <property type="project" value="UniProtKB-KW"/>
</dbReference>
<dbReference type="InterPro" id="IPR013144">
    <property type="entry name" value="CRA_dom"/>
</dbReference>
<dbReference type="InterPro" id="IPR024964">
    <property type="entry name" value="CTLH/CRA"/>
</dbReference>
<dbReference type="InterPro" id="IPR006595">
    <property type="entry name" value="CTLH_C"/>
</dbReference>
<dbReference type="InterPro" id="IPR006594">
    <property type="entry name" value="LisH"/>
</dbReference>
<dbReference type="InterPro" id="IPR050618">
    <property type="entry name" value="Ubq-SigPath_Reg"/>
</dbReference>
<dbReference type="PANTHER" id="PTHR12864">
    <property type="entry name" value="RAN BINDING PROTEIN 9-RELATED"/>
    <property type="match status" value="1"/>
</dbReference>
<dbReference type="Pfam" id="PF10607">
    <property type="entry name" value="CTLH"/>
    <property type="match status" value="1"/>
</dbReference>
<dbReference type="Pfam" id="PF08513">
    <property type="entry name" value="LisH"/>
    <property type="match status" value="1"/>
</dbReference>
<dbReference type="SMART" id="SM00757">
    <property type="entry name" value="CRA"/>
    <property type="match status" value="1"/>
</dbReference>
<dbReference type="SMART" id="SM00668">
    <property type="entry name" value="CTLH"/>
    <property type="match status" value="1"/>
</dbReference>
<dbReference type="SMART" id="SM00667">
    <property type="entry name" value="LisH"/>
    <property type="match status" value="1"/>
</dbReference>
<dbReference type="PROSITE" id="PS50897">
    <property type="entry name" value="CTLH"/>
    <property type="match status" value="1"/>
</dbReference>
<dbReference type="PROSITE" id="PS50896">
    <property type="entry name" value="LISH"/>
    <property type="match status" value="1"/>
</dbReference>
<protein>
    <recommendedName>
        <fullName>Glucose-induced degradation protein 8-B homolog</fullName>
    </recommendedName>
    <alternativeName>
        <fullName evidence="5">Two hybrid-associated protein 1 with RanBPM</fullName>
        <shortName evidence="5">Twa1</shortName>
    </alternativeName>
</protein>